<evidence type="ECO:0000255" key="1">
    <source>
        <dbReference type="HAMAP-Rule" id="MF_01347"/>
    </source>
</evidence>
<sequence length="486" mass="52183">MVATPSISSQTKGVVRQVIGPVLDVEFPAGKLPKILNALRIEAKNPAGQDIALTAEVQQLLGDHRVRAVAMSGTDGLVRGMEAIDTGAPISVPVGEATLGRIFNVLGEPVDEQGPVNTKDTAPIHRAAPKLTDLETKPKVFETGIKVIDLLAPYRQGGKVGLFGGAGVGKTVLIQELINNIAKEHGGVSVFGGVGERTREGNDLYEEFKESGVINADDLTQSKVALCFGQMNEPPGARMRVGLSALTMAEHFRDVNKQDVLLFVDNIFRFVQAGSEVSALLGRMPSAVGYQPTLGTDVGELQERITSTLEGSITSIQAVYVPADDLTDPAPATTFAHLDATTVLARALAAKGIYPAVDPLDSTSTMLQPSVVGDEHYKTARAVQSTLQRYKELQDIIAILGLDELSEEDRLTVDRARKIEKFLSQPFFVAEIFTGMSGKYVKLEDTIAGFNMILSGELDDLPEQAFYLVGNIDEVKAKAEKIKSEK</sequence>
<organism>
    <name type="scientific">Prochlorococcus marinus (strain AS9601)</name>
    <dbReference type="NCBI Taxonomy" id="146891"/>
    <lineage>
        <taxon>Bacteria</taxon>
        <taxon>Bacillati</taxon>
        <taxon>Cyanobacteriota</taxon>
        <taxon>Cyanophyceae</taxon>
        <taxon>Synechococcales</taxon>
        <taxon>Prochlorococcaceae</taxon>
        <taxon>Prochlorococcus</taxon>
    </lineage>
</organism>
<keyword id="KW-0066">ATP synthesis</keyword>
<keyword id="KW-0067">ATP-binding</keyword>
<keyword id="KW-0139">CF(1)</keyword>
<keyword id="KW-0375">Hydrogen ion transport</keyword>
<keyword id="KW-0406">Ion transport</keyword>
<keyword id="KW-0472">Membrane</keyword>
<keyword id="KW-0547">Nucleotide-binding</keyword>
<keyword id="KW-0793">Thylakoid</keyword>
<keyword id="KW-1278">Translocase</keyword>
<keyword id="KW-0813">Transport</keyword>
<comment type="function">
    <text evidence="1">Produces ATP from ADP in the presence of a proton gradient across the membrane. The catalytic sites are hosted primarily by the beta subunits.</text>
</comment>
<comment type="catalytic activity">
    <reaction evidence="1">
        <text>ATP + H2O + 4 H(+)(in) = ADP + phosphate + 5 H(+)(out)</text>
        <dbReference type="Rhea" id="RHEA:57720"/>
        <dbReference type="ChEBI" id="CHEBI:15377"/>
        <dbReference type="ChEBI" id="CHEBI:15378"/>
        <dbReference type="ChEBI" id="CHEBI:30616"/>
        <dbReference type="ChEBI" id="CHEBI:43474"/>
        <dbReference type="ChEBI" id="CHEBI:456216"/>
        <dbReference type="EC" id="7.1.2.2"/>
    </reaction>
</comment>
<comment type="subunit">
    <text evidence="1">F-type ATPases have 2 components, CF(1) - the catalytic core - and CF(0) - the membrane proton channel. CF(1) has five subunits: alpha(3), beta(3), gamma(1), delta(1), epsilon(1). CF(0) has four main subunits: a(1), b(1), b'(1) and c(9-12).</text>
</comment>
<comment type="subcellular location">
    <subcellularLocation>
        <location evidence="1">Cellular thylakoid membrane</location>
        <topology evidence="1">Peripheral membrane protein</topology>
    </subcellularLocation>
</comment>
<comment type="similarity">
    <text evidence="1">Belongs to the ATPase alpha/beta chains family.</text>
</comment>
<accession>A2BT12</accession>
<name>ATPB_PROMS</name>
<protein>
    <recommendedName>
        <fullName evidence="1">ATP synthase subunit beta</fullName>
        <ecNumber evidence="1">7.1.2.2</ecNumber>
    </recommendedName>
    <alternativeName>
        <fullName evidence="1">ATP synthase F1 sector subunit beta</fullName>
    </alternativeName>
    <alternativeName>
        <fullName evidence="1">F-ATPase subunit beta</fullName>
    </alternativeName>
</protein>
<feature type="chain" id="PRO_1000055145" description="ATP synthase subunit beta">
    <location>
        <begin position="1"/>
        <end position="486"/>
    </location>
</feature>
<feature type="binding site" evidence="1">
    <location>
        <begin position="164"/>
        <end position="171"/>
    </location>
    <ligand>
        <name>ATP</name>
        <dbReference type="ChEBI" id="CHEBI:30616"/>
    </ligand>
</feature>
<dbReference type="EC" id="7.1.2.2" evidence="1"/>
<dbReference type="EMBL" id="CP000551">
    <property type="protein sequence ID" value="ABM70923.1"/>
    <property type="molecule type" value="Genomic_DNA"/>
</dbReference>
<dbReference type="RefSeq" id="WP_011819053.1">
    <property type="nucleotide sequence ID" value="NC_008816.1"/>
</dbReference>
<dbReference type="SMR" id="A2BT12"/>
<dbReference type="STRING" id="146891.A9601_16401"/>
<dbReference type="KEGG" id="pmb:A9601_16401"/>
<dbReference type="eggNOG" id="COG0055">
    <property type="taxonomic scope" value="Bacteria"/>
</dbReference>
<dbReference type="HOGENOM" id="CLU_022398_0_2_3"/>
<dbReference type="OrthoDB" id="9801639at2"/>
<dbReference type="Proteomes" id="UP000002590">
    <property type="component" value="Chromosome"/>
</dbReference>
<dbReference type="GO" id="GO:0031676">
    <property type="term" value="C:plasma membrane-derived thylakoid membrane"/>
    <property type="evidence" value="ECO:0007669"/>
    <property type="project" value="UniProtKB-SubCell"/>
</dbReference>
<dbReference type="GO" id="GO:0045259">
    <property type="term" value="C:proton-transporting ATP synthase complex"/>
    <property type="evidence" value="ECO:0007669"/>
    <property type="project" value="UniProtKB-KW"/>
</dbReference>
<dbReference type="GO" id="GO:0005524">
    <property type="term" value="F:ATP binding"/>
    <property type="evidence" value="ECO:0007669"/>
    <property type="project" value="UniProtKB-UniRule"/>
</dbReference>
<dbReference type="GO" id="GO:0016887">
    <property type="term" value="F:ATP hydrolysis activity"/>
    <property type="evidence" value="ECO:0007669"/>
    <property type="project" value="InterPro"/>
</dbReference>
<dbReference type="GO" id="GO:0046933">
    <property type="term" value="F:proton-transporting ATP synthase activity, rotational mechanism"/>
    <property type="evidence" value="ECO:0007669"/>
    <property type="project" value="UniProtKB-UniRule"/>
</dbReference>
<dbReference type="CDD" id="cd18110">
    <property type="entry name" value="ATP-synt_F1_beta_C"/>
    <property type="match status" value="1"/>
</dbReference>
<dbReference type="CDD" id="cd18115">
    <property type="entry name" value="ATP-synt_F1_beta_N"/>
    <property type="match status" value="1"/>
</dbReference>
<dbReference type="CDD" id="cd01133">
    <property type="entry name" value="F1-ATPase_beta_CD"/>
    <property type="match status" value="1"/>
</dbReference>
<dbReference type="FunFam" id="1.10.1140.10:FF:000001">
    <property type="entry name" value="ATP synthase subunit beta"/>
    <property type="match status" value="1"/>
</dbReference>
<dbReference type="FunFam" id="3.40.50.300:FF:000004">
    <property type="entry name" value="ATP synthase subunit beta"/>
    <property type="match status" value="1"/>
</dbReference>
<dbReference type="FunFam" id="2.40.10.170:FF:000002">
    <property type="entry name" value="ATP synthase subunit beta, chloroplastic"/>
    <property type="match status" value="1"/>
</dbReference>
<dbReference type="Gene3D" id="2.40.10.170">
    <property type="match status" value="1"/>
</dbReference>
<dbReference type="Gene3D" id="1.10.1140.10">
    <property type="entry name" value="Bovine Mitochondrial F1-atpase, Atp Synthase Beta Chain, Chain D, domain 3"/>
    <property type="match status" value="1"/>
</dbReference>
<dbReference type="Gene3D" id="3.40.50.300">
    <property type="entry name" value="P-loop containing nucleotide triphosphate hydrolases"/>
    <property type="match status" value="1"/>
</dbReference>
<dbReference type="HAMAP" id="MF_01347">
    <property type="entry name" value="ATP_synth_beta_bact"/>
    <property type="match status" value="1"/>
</dbReference>
<dbReference type="InterPro" id="IPR003593">
    <property type="entry name" value="AAA+_ATPase"/>
</dbReference>
<dbReference type="InterPro" id="IPR055190">
    <property type="entry name" value="ATP-synt_VA_C"/>
</dbReference>
<dbReference type="InterPro" id="IPR005722">
    <property type="entry name" value="ATP_synth_F1_bsu"/>
</dbReference>
<dbReference type="InterPro" id="IPR020003">
    <property type="entry name" value="ATPase_a/bsu_AS"/>
</dbReference>
<dbReference type="InterPro" id="IPR050053">
    <property type="entry name" value="ATPase_alpha/beta_chains"/>
</dbReference>
<dbReference type="InterPro" id="IPR004100">
    <property type="entry name" value="ATPase_F1/V1/A1_a/bsu_N"/>
</dbReference>
<dbReference type="InterPro" id="IPR036121">
    <property type="entry name" value="ATPase_F1/V1/A1_a/bsu_N_sf"/>
</dbReference>
<dbReference type="InterPro" id="IPR000194">
    <property type="entry name" value="ATPase_F1/V1/A1_a/bsu_nucl-bd"/>
</dbReference>
<dbReference type="InterPro" id="IPR024034">
    <property type="entry name" value="ATPase_F1/V1_b/a_C"/>
</dbReference>
<dbReference type="InterPro" id="IPR027417">
    <property type="entry name" value="P-loop_NTPase"/>
</dbReference>
<dbReference type="NCBIfam" id="TIGR01039">
    <property type="entry name" value="atpD"/>
    <property type="match status" value="1"/>
</dbReference>
<dbReference type="PANTHER" id="PTHR15184">
    <property type="entry name" value="ATP SYNTHASE"/>
    <property type="match status" value="1"/>
</dbReference>
<dbReference type="PANTHER" id="PTHR15184:SF71">
    <property type="entry name" value="ATP SYNTHASE SUBUNIT BETA, MITOCHONDRIAL"/>
    <property type="match status" value="1"/>
</dbReference>
<dbReference type="Pfam" id="PF00006">
    <property type="entry name" value="ATP-synt_ab"/>
    <property type="match status" value="1"/>
</dbReference>
<dbReference type="Pfam" id="PF02874">
    <property type="entry name" value="ATP-synt_ab_N"/>
    <property type="match status" value="1"/>
</dbReference>
<dbReference type="Pfam" id="PF22919">
    <property type="entry name" value="ATP-synt_VA_C"/>
    <property type="match status" value="1"/>
</dbReference>
<dbReference type="SMART" id="SM00382">
    <property type="entry name" value="AAA"/>
    <property type="match status" value="1"/>
</dbReference>
<dbReference type="SUPFAM" id="SSF47917">
    <property type="entry name" value="C-terminal domain of alpha and beta subunits of F1 ATP synthase"/>
    <property type="match status" value="1"/>
</dbReference>
<dbReference type="SUPFAM" id="SSF50615">
    <property type="entry name" value="N-terminal domain of alpha and beta subunits of F1 ATP synthase"/>
    <property type="match status" value="1"/>
</dbReference>
<dbReference type="SUPFAM" id="SSF52540">
    <property type="entry name" value="P-loop containing nucleoside triphosphate hydrolases"/>
    <property type="match status" value="1"/>
</dbReference>
<dbReference type="PROSITE" id="PS00152">
    <property type="entry name" value="ATPASE_ALPHA_BETA"/>
    <property type="match status" value="1"/>
</dbReference>
<gene>
    <name evidence="1" type="primary">atpD</name>
    <name evidence="1" type="synonym">atpB</name>
    <name type="ordered locus">A9601_16401</name>
</gene>
<reference key="1">
    <citation type="journal article" date="2007" name="PLoS Genet.">
        <title>Patterns and implications of gene gain and loss in the evolution of Prochlorococcus.</title>
        <authorList>
            <person name="Kettler G.C."/>
            <person name="Martiny A.C."/>
            <person name="Huang K."/>
            <person name="Zucker J."/>
            <person name="Coleman M.L."/>
            <person name="Rodrigue S."/>
            <person name="Chen F."/>
            <person name="Lapidus A."/>
            <person name="Ferriera S."/>
            <person name="Johnson J."/>
            <person name="Steglich C."/>
            <person name="Church G.M."/>
            <person name="Richardson P."/>
            <person name="Chisholm S.W."/>
        </authorList>
    </citation>
    <scope>NUCLEOTIDE SEQUENCE [LARGE SCALE GENOMIC DNA]</scope>
    <source>
        <strain>AS9601</strain>
    </source>
</reference>
<proteinExistence type="inferred from homology"/>